<organism>
    <name type="scientific">Actinobacillus succinogenes (strain ATCC 55618 / DSM 22257 / CCUG 43843 / 130Z)</name>
    <dbReference type="NCBI Taxonomy" id="339671"/>
    <lineage>
        <taxon>Bacteria</taxon>
        <taxon>Pseudomonadati</taxon>
        <taxon>Pseudomonadota</taxon>
        <taxon>Gammaproteobacteria</taxon>
        <taxon>Pasteurellales</taxon>
        <taxon>Pasteurellaceae</taxon>
        <taxon>Actinobacillus</taxon>
    </lineage>
</organism>
<comment type="function">
    <text evidence="1">Is required not only for elongation of protein synthesis but also for the initiation of all mRNA translation through initiator tRNA(fMet) aminoacylation.</text>
</comment>
<comment type="catalytic activity">
    <reaction evidence="1">
        <text>tRNA(Met) + L-methionine + ATP = L-methionyl-tRNA(Met) + AMP + diphosphate</text>
        <dbReference type="Rhea" id="RHEA:13481"/>
        <dbReference type="Rhea" id="RHEA-COMP:9667"/>
        <dbReference type="Rhea" id="RHEA-COMP:9698"/>
        <dbReference type="ChEBI" id="CHEBI:30616"/>
        <dbReference type="ChEBI" id="CHEBI:33019"/>
        <dbReference type="ChEBI" id="CHEBI:57844"/>
        <dbReference type="ChEBI" id="CHEBI:78442"/>
        <dbReference type="ChEBI" id="CHEBI:78530"/>
        <dbReference type="ChEBI" id="CHEBI:456215"/>
        <dbReference type="EC" id="6.1.1.10"/>
    </reaction>
</comment>
<comment type="cofactor">
    <cofactor evidence="1">
        <name>Zn(2+)</name>
        <dbReference type="ChEBI" id="CHEBI:29105"/>
    </cofactor>
    <text evidence="1">Binds 1 zinc ion per subunit.</text>
</comment>
<comment type="subunit">
    <text evidence="1">Homodimer.</text>
</comment>
<comment type="subcellular location">
    <subcellularLocation>
        <location evidence="1">Cytoplasm</location>
    </subcellularLocation>
</comment>
<comment type="similarity">
    <text evidence="1">Belongs to the class-I aminoacyl-tRNA synthetase family. MetG type 1 subfamily.</text>
</comment>
<sequence length="685" mass="77776">MSKANRQILVTCALPYANGPIHLGHMLEHIQADIWVRFQRMRGHEIYFVCADDAHGTPIMLKADQMGIAPEQLIADVQKSHYADFCGFNISFDNYHSTHSEENREFSEMIYNRLKENGFIKTRAISQLFDPEKSMFLPDRFVKGTCPKCKAEDQYGDNCEVCSATYSPTELIAPRSVVSGATPIIKESEHFFFDLPSFEAMLKQWNRSGALQSEVANKMQEWFDAGLQQWDISRDAPYFGFKIPGTENKYFYVWLDAPIGYMASFKNLCNRQNIDFDRFWNKDSQAELYHFIGKDIMYFHSLFWPAMLEGADLRKPSNIFVHGYVTVNGEKMSKSRGTFIQAATYLKHLDPECLRYYYAAKLSNRIDDLDLNLEDFVQRVNTDLVNKLVNLASRNAGFIQKRFAGKLADKLDDEALFNEFIAQSAQIAAYYENREFGKAVREIMALTDKANKYVDEKAPWVIAKEQGRETELQRVCSMGIQLFRVLMGYLKPVLPKLAERSEAFLQAELTWDNLTQPLLDHEIAPFKALFSRVDSKQIEAMIEASKAENAAVNSSPKAEKTAKKTTALESEFEPLEAEISIDDFAKMDLRVAKVISCEAVPESKKLLKFQLDLGFETRQVLSGIKAAYGNPEELMGRFVIMVANLAPRKMKFGMSEGMILSAGSGGEDLFLLDVDAGVKAGSRVK</sequence>
<gene>
    <name evidence="1" type="primary">metG</name>
    <name type="ordered locus">Asuc_1831</name>
</gene>
<keyword id="KW-0030">Aminoacyl-tRNA synthetase</keyword>
<keyword id="KW-0067">ATP-binding</keyword>
<keyword id="KW-0963">Cytoplasm</keyword>
<keyword id="KW-0436">Ligase</keyword>
<keyword id="KW-0479">Metal-binding</keyword>
<keyword id="KW-0547">Nucleotide-binding</keyword>
<keyword id="KW-0648">Protein biosynthesis</keyword>
<keyword id="KW-1185">Reference proteome</keyword>
<keyword id="KW-0694">RNA-binding</keyword>
<keyword id="KW-0820">tRNA-binding</keyword>
<keyword id="KW-0862">Zinc</keyword>
<protein>
    <recommendedName>
        <fullName evidence="1">Methionine--tRNA ligase</fullName>
        <ecNumber evidence="1">6.1.1.10</ecNumber>
    </recommendedName>
    <alternativeName>
        <fullName evidence="1">Methionyl-tRNA synthetase</fullName>
        <shortName evidence="1">MetRS</shortName>
    </alternativeName>
</protein>
<reference key="1">
    <citation type="journal article" date="2010" name="BMC Genomics">
        <title>A genomic perspective on the potential of Actinobacillus succinogenes for industrial succinate production.</title>
        <authorList>
            <person name="McKinlay J.B."/>
            <person name="Laivenieks M."/>
            <person name="Schindler B.D."/>
            <person name="McKinlay A.A."/>
            <person name="Siddaramappa S."/>
            <person name="Challacombe J.F."/>
            <person name="Lowry S.R."/>
            <person name="Clum A."/>
            <person name="Lapidus A.L."/>
            <person name="Burkhart K.B."/>
            <person name="Harkins V."/>
            <person name="Vieille C."/>
        </authorList>
    </citation>
    <scope>NUCLEOTIDE SEQUENCE [LARGE SCALE GENOMIC DNA]</scope>
    <source>
        <strain>ATCC 55618 / DSM 22257 / CCUG 43843 / 130Z</strain>
    </source>
</reference>
<feature type="chain" id="PRO_0000331774" description="Methionine--tRNA ligase">
    <location>
        <begin position="1"/>
        <end position="685"/>
    </location>
</feature>
<feature type="domain" description="tRNA-binding" evidence="1">
    <location>
        <begin position="583"/>
        <end position="685"/>
    </location>
</feature>
<feature type="short sequence motif" description="'HIGH' region">
    <location>
        <begin position="15"/>
        <end position="25"/>
    </location>
</feature>
<feature type="short sequence motif" description="'KMSKS' region">
    <location>
        <begin position="331"/>
        <end position="335"/>
    </location>
</feature>
<feature type="binding site" evidence="1">
    <location>
        <position position="146"/>
    </location>
    <ligand>
        <name>Zn(2+)</name>
        <dbReference type="ChEBI" id="CHEBI:29105"/>
    </ligand>
</feature>
<feature type="binding site" evidence="1">
    <location>
        <position position="149"/>
    </location>
    <ligand>
        <name>Zn(2+)</name>
        <dbReference type="ChEBI" id="CHEBI:29105"/>
    </ligand>
</feature>
<feature type="binding site" evidence="1">
    <location>
        <position position="159"/>
    </location>
    <ligand>
        <name>Zn(2+)</name>
        <dbReference type="ChEBI" id="CHEBI:29105"/>
    </ligand>
</feature>
<feature type="binding site" evidence="1">
    <location>
        <position position="162"/>
    </location>
    <ligand>
        <name>Zn(2+)</name>
        <dbReference type="ChEBI" id="CHEBI:29105"/>
    </ligand>
</feature>
<feature type="binding site" evidence="1">
    <location>
        <position position="334"/>
    </location>
    <ligand>
        <name>ATP</name>
        <dbReference type="ChEBI" id="CHEBI:30616"/>
    </ligand>
</feature>
<accession>A6VQD5</accession>
<name>SYM_ACTSZ</name>
<proteinExistence type="inferred from homology"/>
<evidence type="ECO:0000255" key="1">
    <source>
        <dbReference type="HAMAP-Rule" id="MF_00098"/>
    </source>
</evidence>
<dbReference type="EC" id="6.1.1.10" evidence="1"/>
<dbReference type="EMBL" id="CP000746">
    <property type="protein sequence ID" value="ABR75182.1"/>
    <property type="molecule type" value="Genomic_DNA"/>
</dbReference>
<dbReference type="RefSeq" id="WP_012073559.1">
    <property type="nucleotide sequence ID" value="NC_009655.1"/>
</dbReference>
<dbReference type="SMR" id="A6VQD5"/>
<dbReference type="STRING" id="339671.Asuc_1831"/>
<dbReference type="KEGG" id="asu:Asuc_1831"/>
<dbReference type="eggNOG" id="COG0073">
    <property type="taxonomic scope" value="Bacteria"/>
</dbReference>
<dbReference type="eggNOG" id="COG0143">
    <property type="taxonomic scope" value="Bacteria"/>
</dbReference>
<dbReference type="HOGENOM" id="CLU_009710_7_0_6"/>
<dbReference type="OrthoDB" id="9810191at2"/>
<dbReference type="Proteomes" id="UP000001114">
    <property type="component" value="Chromosome"/>
</dbReference>
<dbReference type="GO" id="GO:0005829">
    <property type="term" value="C:cytosol"/>
    <property type="evidence" value="ECO:0007669"/>
    <property type="project" value="TreeGrafter"/>
</dbReference>
<dbReference type="GO" id="GO:0005524">
    <property type="term" value="F:ATP binding"/>
    <property type="evidence" value="ECO:0007669"/>
    <property type="project" value="UniProtKB-UniRule"/>
</dbReference>
<dbReference type="GO" id="GO:0046872">
    <property type="term" value="F:metal ion binding"/>
    <property type="evidence" value="ECO:0007669"/>
    <property type="project" value="UniProtKB-KW"/>
</dbReference>
<dbReference type="GO" id="GO:0004825">
    <property type="term" value="F:methionine-tRNA ligase activity"/>
    <property type="evidence" value="ECO:0007669"/>
    <property type="project" value="UniProtKB-UniRule"/>
</dbReference>
<dbReference type="GO" id="GO:0000049">
    <property type="term" value="F:tRNA binding"/>
    <property type="evidence" value="ECO:0007669"/>
    <property type="project" value="UniProtKB-KW"/>
</dbReference>
<dbReference type="GO" id="GO:0006431">
    <property type="term" value="P:methionyl-tRNA aminoacylation"/>
    <property type="evidence" value="ECO:0007669"/>
    <property type="project" value="UniProtKB-UniRule"/>
</dbReference>
<dbReference type="CDD" id="cd07957">
    <property type="entry name" value="Anticodon_Ia_Met"/>
    <property type="match status" value="1"/>
</dbReference>
<dbReference type="CDD" id="cd00814">
    <property type="entry name" value="MetRS_core"/>
    <property type="match status" value="1"/>
</dbReference>
<dbReference type="CDD" id="cd02800">
    <property type="entry name" value="tRNA_bind_EcMetRS_like"/>
    <property type="match status" value="1"/>
</dbReference>
<dbReference type="FunFam" id="1.10.730.10:FF:000005">
    <property type="entry name" value="Methionine--tRNA ligase"/>
    <property type="match status" value="1"/>
</dbReference>
<dbReference type="FunFam" id="2.20.28.20:FF:000001">
    <property type="entry name" value="Methionine--tRNA ligase"/>
    <property type="match status" value="1"/>
</dbReference>
<dbReference type="FunFam" id="2.40.50.140:FF:000042">
    <property type="entry name" value="Methionine--tRNA ligase"/>
    <property type="match status" value="1"/>
</dbReference>
<dbReference type="Gene3D" id="3.40.50.620">
    <property type="entry name" value="HUPs"/>
    <property type="match status" value="1"/>
</dbReference>
<dbReference type="Gene3D" id="1.10.730.10">
    <property type="entry name" value="Isoleucyl-tRNA Synthetase, Domain 1"/>
    <property type="match status" value="1"/>
</dbReference>
<dbReference type="Gene3D" id="2.20.28.20">
    <property type="entry name" value="Methionyl-tRNA synthetase, Zn-domain"/>
    <property type="match status" value="1"/>
</dbReference>
<dbReference type="Gene3D" id="2.40.50.140">
    <property type="entry name" value="Nucleic acid-binding proteins"/>
    <property type="match status" value="1"/>
</dbReference>
<dbReference type="HAMAP" id="MF_00098">
    <property type="entry name" value="Met_tRNA_synth_type1"/>
    <property type="match status" value="1"/>
</dbReference>
<dbReference type="InterPro" id="IPR001412">
    <property type="entry name" value="aa-tRNA-synth_I_CS"/>
</dbReference>
<dbReference type="InterPro" id="IPR041872">
    <property type="entry name" value="Anticodon_Met"/>
</dbReference>
<dbReference type="InterPro" id="IPR004495">
    <property type="entry name" value="Met-tRNA-synth_bsu_C"/>
</dbReference>
<dbReference type="InterPro" id="IPR023458">
    <property type="entry name" value="Met-tRNA_ligase_1"/>
</dbReference>
<dbReference type="InterPro" id="IPR014758">
    <property type="entry name" value="Met-tRNA_synth"/>
</dbReference>
<dbReference type="InterPro" id="IPR015413">
    <property type="entry name" value="Methionyl/Leucyl_tRNA_Synth"/>
</dbReference>
<dbReference type="InterPro" id="IPR033911">
    <property type="entry name" value="MetRS_core"/>
</dbReference>
<dbReference type="InterPro" id="IPR029038">
    <property type="entry name" value="MetRS_Zn"/>
</dbReference>
<dbReference type="InterPro" id="IPR012340">
    <property type="entry name" value="NA-bd_OB-fold"/>
</dbReference>
<dbReference type="InterPro" id="IPR014729">
    <property type="entry name" value="Rossmann-like_a/b/a_fold"/>
</dbReference>
<dbReference type="InterPro" id="IPR002547">
    <property type="entry name" value="tRNA-bd_dom"/>
</dbReference>
<dbReference type="InterPro" id="IPR009080">
    <property type="entry name" value="tRNAsynth_Ia_anticodon-bd"/>
</dbReference>
<dbReference type="NCBIfam" id="TIGR00398">
    <property type="entry name" value="metG"/>
    <property type="match status" value="1"/>
</dbReference>
<dbReference type="NCBIfam" id="TIGR00399">
    <property type="entry name" value="metG_C_term"/>
    <property type="match status" value="1"/>
</dbReference>
<dbReference type="NCBIfam" id="NF001100">
    <property type="entry name" value="PRK00133.1"/>
    <property type="match status" value="1"/>
</dbReference>
<dbReference type="PANTHER" id="PTHR45765">
    <property type="entry name" value="METHIONINE--TRNA LIGASE"/>
    <property type="match status" value="1"/>
</dbReference>
<dbReference type="PANTHER" id="PTHR45765:SF1">
    <property type="entry name" value="METHIONINE--TRNA LIGASE, CYTOPLASMIC"/>
    <property type="match status" value="1"/>
</dbReference>
<dbReference type="Pfam" id="PF19303">
    <property type="entry name" value="Anticodon_3"/>
    <property type="match status" value="1"/>
</dbReference>
<dbReference type="Pfam" id="PF09334">
    <property type="entry name" value="tRNA-synt_1g"/>
    <property type="match status" value="1"/>
</dbReference>
<dbReference type="Pfam" id="PF01588">
    <property type="entry name" value="tRNA_bind"/>
    <property type="match status" value="1"/>
</dbReference>
<dbReference type="PRINTS" id="PR01041">
    <property type="entry name" value="TRNASYNTHMET"/>
</dbReference>
<dbReference type="SUPFAM" id="SSF47323">
    <property type="entry name" value="Anticodon-binding domain of a subclass of class I aminoacyl-tRNA synthetases"/>
    <property type="match status" value="1"/>
</dbReference>
<dbReference type="SUPFAM" id="SSF57770">
    <property type="entry name" value="Methionyl-tRNA synthetase (MetRS), Zn-domain"/>
    <property type="match status" value="1"/>
</dbReference>
<dbReference type="SUPFAM" id="SSF50249">
    <property type="entry name" value="Nucleic acid-binding proteins"/>
    <property type="match status" value="1"/>
</dbReference>
<dbReference type="SUPFAM" id="SSF52374">
    <property type="entry name" value="Nucleotidylyl transferase"/>
    <property type="match status" value="1"/>
</dbReference>
<dbReference type="PROSITE" id="PS00178">
    <property type="entry name" value="AA_TRNA_LIGASE_I"/>
    <property type="match status" value="1"/>
</dbReference>
<dbReference type="PROSITE" id="PS50886">
    <property type="entry name" value="TRBD"/>
    <property type="match status" value="1"/>
</dbReference>